<name>RL24_SALTY</name>
<keyword id="KW-1185">Reference proteome</keyword>
<keyword id="KW-0687">Ribonucleoprotein</keyword>
<keyword id="KW-0689">Ribosomal protein</keyword>
<keyword id="KW-0694">RNA-binding</keyword>
<keyword id="KW-0699">rRNA-binding</keyword>
<dbReference type="EMBL" id="AE006468">
    <property type="protein sequence ID" value="AAL22292.1"/>
    <property type="molecule type" value="Genomic_DNA"/>
</dbReference>
<dbReference type="EMBL" id="M36266">
    <property type="protein sequence ID" value="AAA27227.1"/>
    <property type="molecule type" value="Genomic_DNA"/>
</dbReference>
<dbReference type="RefSeq" id="NP_462333.1">
    <property type="nucleotide sequence ID" value="NC_003197.2"/>
</dbReference>
<dbReference type="RefSeq" id="WP_000729185.1">
    <property type="nucleotide sequence ID" value="NC_003197.2"/>
</dbReference>
<dbReference type="SMR" id="P60626"/>
<dbReference type="STRING" id="99287.STM3429"/>
<dbReference type="PaxDb" id="99287-STM3429"/>
<dbReference type="GeneID" id="1254952"/>
<dbReference type="GeneID" id="93778678"/>
<dbReference type="KEGG" id="stm:STM3429"/>
<dbReference type="PATRIC" id="fig|99287.12.peg.3626"/>
<dbReference type="HOGENOM" id="CLU_093315_2_2_6"/>
<dbReference type="OMA" id="HISNLML"/>
<dbReference type="PhylomeDB" id="P60626"/>
<dbReference type="BioCyc" id="SENT99287:STM3429-MONOMER"/>
<dbReference type="PRO" id="PR:P60626"/>
<dbReference type="Proteomes" id="UP000001014">
    <property type="component" value="Chromosome"/>
</dbReference>
<dbReference type="GO" id="GO:0022625">
    <property type="term" value="C:cytosolic large ribosomal subunit"/>
    <property type="evidence" value="ECO:0000318"/>
    <property type="project" value="GO_Central"/>
</dbReference>
<dbReference type="GO" id="GO:0019843">
    <property type="term" value="F:rRNA binding"/>
    <property type="evidence" value="ECO:0007669"/>
    <property type="project" value="UniProtKB-UniRule"/>
</dbReference>
<dbReference type="GO" id="GO:0003735">
    <property type="term" value="F:structural constituent of ribosome"/>
    <property type="evidence" value="ECO:0007669"/>
    <property type="project" value="InterPro"/>
</dbReference>
<dbReference type="GO" id="GO:0006412">
    <property type="term" value="P:translation"/>
    <property type="evidence" value="ECO:0000318"/>
    <property type="project" value="GO_Central"/>
</dbReference>
<dbReference type="CDD" id="cd06089">
    <property type="entry name" value="KOW_RPL26"/>
    <property type="match status" value="1"/>
</dbReference>
<dbReference type="FunFam" id="2.30.30.30:FF:000004">
    <property type="entry name" value="50S ribosomal protein L24"/>
    <property type="match status" value="1"/>
</dbReference>
<dbReference type="Gene3D" id="2.30.30.30">
    <property type="match status" value="1"/>
</dbReference>
<dbReference type="HAMAP" id="MF_01326_B">
    <property type="entry name" value="Ribosomal_uL24_B"/>
    <property type="match status" value="1"/>
</dbReference>
<dbReference type="InterPro" id="IPR005824">
    <property type="entry name" value="KOW"/>
</dbReference>
<dbReference type="InterPro" id="IPR014722">
    <property type="entry name" value="Rib_uL2_dom2"/>
</dbReference>
<dbReference type="InterPro" id="IPR003256">
    <property type="entry name" value="Ribosomal_uL24"/>
</dbReference>
<dbReference type="InterPro" id="IPR005825">
    <property type="entry name" value="Ribosomal_uL24_CS"/>
</dbReference>
<dbReference type="InterPro" id="IPR041988">
    <property type="entry name" value="Ribosomal_uL24_KOW"/>
</dbReference>
<dbReference type="InterPro" id="IPR008991">
    <property type="entry name" value="Translation_prot_SH3-like_sf"/>
</dbReference>
<dbReference type="NCBIfam" id="TIGR01079">
    <property type="entry name" value="rplX_bact"/>
    <property type="match status" value="1"/>
</dbReference>
<dbReference type="PANTHER" id="PTHR12903">
    <property type="entry name" value="MITOCHONDRIAL RIBOSOMAL PROTEIN L24"/>
    <property type="match status" value="1"/>
</dbReference>
<dbReference type="Pfam" id="PF00467">
    <property type="entry name" value="KOW"/>
    <property type="match status" value="1"/>
</dbReference>
<dbReference type="Pfam" id="PF17136">
    <property type="entry name" value="ribosomal_L24"/>
    <property type="match status" value="1"/>
</dbReference>
<dbReference type="SMART" id="SM00739">
    <property type="entry name" value="KOW"/>
    <property type="match status" value="1"/>
</dbReference>
<dbReference type="SUPFAM" id="SSF50104">
    <property type="entry name" value="Translation proteins SH3-like domain"/>
    <property type="match status" value="1"/>
</dbReference>
<dbReference type="PROSITE" id="PS01108">
    <property type="entry name" value="RIBOSOMAL_L24"/>
    <property type="match status" value="1"/>
</dbReference>
<organism>
    <name type="scientific">Salmonella typhimurium (strain LT2 / SGSC1412 / ATCC 700720)</name>
    <dbReference type="NCBI Taxonomy" id="99287"/>
    <lineage>
        <taxon>Bacteria</taxon>
        <taxon>Pseudomonadati</taxon>
        <taxon>Pseudomonadota</taxon>
        <taxon>Gammaproteobacteria</taxon>
        <taxon>Enterobacterales</taxon>
        <taxon>Enterobacteriaceae</taxon>
        <taxon>Salmonella</taxon>
    </lineage>
</organism>
<feature type="initiator methionine" description="Removed" evidence="1">
    <location>
        <position position="1"/>
    </location>
</feature>
<feature type="chain" id="PRO_0000130708" description="Large ribosomal subunit protein uL24">
    <location>
        <begin position="2"/>
        <end position="104"/>
    </location>
</feature>
<sequence>MAAKIRRDDEVIVLTGKDKGKRGKVKNVLSSGKVIVEGINLVKKHQKPVPALNQPGGIVEKEAAIQVSNVAIFNAATGKADRVGFRFEDGKKVRFFKSNSETIK</sequence>
<proteinExistence type="inferred from homology"/>
<evidence type="ECO:0000250" key="1"/>
<evidence type="ECO:0000255" key="2">
    <source>
        <dbReference type="HAMAP-Rule" id="MF_01326"/>
    </source>
</evidence>
<evidence type="ECO:0000305" key="3"/>
<reference key="1">
    <citation type="journal article" date="2001" name="Nature">
        <title>Complete genome sequence of Salmonella enterica serovar Typhimurium LT2.</title>
        <authorList>
            <person name="McClelland M."/>
            <person name="Sanderson K.E."/>
            <person name="Spieth J."/>
            <person name="Clifton S.W."/>
            <person name="Latreille P."/>
            <person name="Courtney L."/>
            <person name="Porwollik S."/>
            <person name="Ali J."/>
            <person name="Dante M."/>
            <person name="Du F."/>
            <person name="Hou S."/>
            <person name="Layman D."/>
            <person name="Leonard S."/>
            <person name="Nguyen C."/>
            <person name="Scott K."/>
            <person name="Holmes A."/>
            <person name="Grewal N."/>
            <person name="Mulvaney E."/>
            <person name="Ryan E."/>
            <person name="Sun H."/>
            <person name="Florea L."/>
            <person name="Miller W."/>
            <person name="Stoneking T."/>
            <person name="Nhan M."/>
            <person name="Waterston R."/>
            <person name="Wilson R.K."/>
        </authorList>
    </citation>
    <scope>NUCLEOTIDE SEQUENCE [LARGE SCALE GENOMIC DNA]</scope>
    <source>
        <strain>LT2 / SGSC1412 / ATCC 700720</strain>
    </source>
</reference>
<reference key="2">
    <citation type="journal article" date="1988" name="J. Mol. Biol.">
        <title>Translational regulation of the spc operon in Escherichia coli. Identification and structural analysis of the target site for S8 repressor protein.</title>
        <authorList>
            <person name="Cerretti D.P."/>
            <person name="Mattheakis L.C."/>
            <person name="Kearney K.R."/>
            <person name="Vu L."/>
            <person name="Nomura M."/>
        </authorList>
    </citation>
    <scope>NUCLEOTIDE SEQUENCE [GENOMIC DNA] OF 87-104</scope>
    <source>
        <strain>NO36</strain>
    </source>
</reference>
<protein>
    <recommendedName>
        <fullName evidence="2">Large ribosomal subunit protein uL24</fullName>
    </recommendedName>
    <alternativeName>
        <fullName evidence="3">50S ribosomal protein L24</fullName>
    </alternativeName>
</protein>
<gene>
    <name evidence="2" type="primary">rplX</name>
    <name type="ordered locus">STM3429</name>
</gene>
<accession>P60626</accession>
<accession>P02425</accession>
<accession>P37438</accession>
<comment type="function">
    <text evidence="2">One of two assembly initiator proteins, it binds directly to the 5'-end of the 23S rRNA, where it nucleates assembly of the 50S subunit.</text>
</comment>
<comment type="function">
    <text evidence="2">One of the proteins that surrounds the polypeptide exit tunnel on the outside of the subunit.</text>
</comment>
<comment type="subunit">
    <text evidence="2">Part of the 50S ribosomal subunit.</text>
</comment>
<comment type="similarity">
    <text evidence="2">Belongs to the universal ribosomal protein uL24 family.</text>
</comment>